<protein>
    <recommendedName>
        <fullName evidence="1">Large ribosomal subunit protein bL21</fullName>
    </recommendedName>
    <alternativeName>
        <fullName evidence="2">50S ribosomal protein L21</fullName>
    </alternativeName>
</protein>
<name>RL21_YERPP</name>
<organism>
    <name type="scientific">Yersinia pestis (strain Pestoides F)</name>
    <dbReference type="NCBI Taxonomy" id="386656"/>
    <lineage>
        <taxon>Bacteria</taxon>
        <taxon>Pseudomonadati</taxon>
        <taxon>Pseudomonadota</taxon>
        <taxon>Gammaproteobacteria</taxon>
        <taxon>Enterobacterales</taxon>
        <taxon>Yersiniaceae</taxon>
        <taxon>Yersinia</taxon>
    </lineage>
</organism>
<dbReference type="EMBL" id="CP000668">
    <property type="protein sequence ID" value="ABP41911.1"/>
    <property type="molecule type" value="Genomic_DNA"/>
</dbReference>
<dbReference type="PIR" id="AI0426">
    <property type="entry name" value="AI0426"/>
</dbReference>
<dbReference type="RefSeq" id="WP_002210178.1">
    <property type="nucleotide sequence ID" value="NZ_CP009715.1"/>
</dbReference>
<dbReference type="SMR" id="A4TRJ9"/>
<dbReference type="GeneID" id="57975202"/>
<dbReference type="KEGG" id="ypp:YPDSF_3561"/>
<dbReference type="PATRIC" id="fig|386656.14.peg.217"/>
<dbReference type="GO" id="GO:0005737">
    <property type="term" value="C:cytoplasm"/>
    <property type="evidence" value="ECO:0007669"/>
    <property type="project" value="UniProtKB-ARBA"/>
</dbReference>
<dbReference type="GO" id="GO:1990904">
    <property type="term" value="C:ribonucleoprotein complex"/>
    <property type="evidence" value="ECO:0007669"/>
    <property type="project" value="UniProtKB-KW"/>
</dbReference>
<dbReference type="GO" id="GO:0005840">
    <property type="term" value="C:ribosome"/>
    <property type="evidence" value="ECO:0007669"/>
    <property type="project" value="UniProtKB-KW"/>
</dbReference>
<dbReference type="GO" id="GO:0019843">
    <property type="term" value="F:rRNA binding"/>
    <property type="evidence" value="ECO:0007669"/>
    <property type="project" value="UniProtKB-UniRule"/>
</dbReference>
<dbReference type="GO" id="GO:0003735">
    <property type="term" value="F:structural constituent of ribosome"/>
    <property type="evidence" value="ECO:0007669"/>
    <property type="project" value="InterPro"/>
</dbReference>
<dbReference type="GO" id="GO:0006412">
    <property type="term" value="P:translation"/>
    <property type="evidence" value="ECO:0007669"/>
    <property type="project" value="UniProtKB-UniRule"/>
</dbReference>
<dbReference type="HAMAP" id="MF_01363">
    <property type="entry name" value="Ribosomal_bL21"/>
    <property type="match status" value="1"/>
</dbReference>
<dbReference type="InterPro" id="IPR028909">
    <property type="entry name" value="bL21-like"/>
</dbReference>
<dbReference type="InterPro" id="IPR036164">
    <property type="entry name" value="bL21-like_sf"/>
</dbReference>
<dbReference type="InterPro" id="IPR001787">
    <property type="entry name" value="Ribosomal_bL21"/>
</dbReference>
<dbReference type="InterPro" id="IPR018258">
    <property type="entry name" value="Ribosomal_bL21_CS"/>
</dbReference>
<dbReference type="NCBIfam" id="TIGR00061">
    <property type="entry name" value="L21"/>
    <property type="match status" value="1"/>
</dbReference>
<dbReference type="PANTHER" id="PTHR21349">
    <property type="entry name" value="50S RIBOSOMAL PROTEIN L21"/>
    <property type="match status" value="1"/>
</dbReference>
<dbReference type="PANTHER" id="PTHR21349:SF0">
    <property type="entry name" value="LARGE RIBOSOMAL SUBUNIT PROTEIN BL21M"/>
    <property type="match status" value="1"/>
</dbReference>
<dbReference type="Pfam" id="PF00829">
    <property type="entry name" value="Ribosomal_L21p"/>
    <property type="match status" value="1"/>
</dbReference>
<dbReference type="SUPFAM" id="SSF141091">
    <property type="entry name" value="L21p-like"/>
    <property type="match status" value="1"/>
</dbReference>
<dbReference type="PROSITE" id="PS01169">
    <property type="entry name" value="RIBOSOMAL_L21"/>
    <property type="match status" value="1"/>
</dbReference>
<accession>A4TRJ9</accession>
<keyword id="KW-0687">Ribonucleoprotein</keyword>
<keyword id="KW-0689">Ribosomal protein</keyword>
<keyword id="KW-0694">RNA-binding</keyword>
<keyword id="KW-0699">rRNA-binding</keyword>
<gene>
    <name evidence="1" type="primary">rplU</name>
    <name type="ordered locus">YPDSF_3561</name>
</gene>
<comment type="function">
    <text evidence="1">This protein binds to 23S rRNA in the presence of protein L20.</text>
</comment>
<comment type="subunit">
    <text evidence="1">Part of the 50S ribosomal subunit. Contacts protein L20.</text>
</comment>
<comment type="similarity">
    <text evidence="1">Belongs to the bacterial ribosomal protein bL21 family.</text>
</comment>
<reference key="1">
    <citation type="submission" date="2007-02" db="EMBL/GenBank/DDBJ databases">
        <title>Complete sequence of chromosome of Yersinia pestis Pestoides F.</title>
        <authorList>
            <consortium name="US DOE Joint Genome Institute"/>
            <person name="Copeland A."/>
            <person name="Lucas S."/>
            <person name="Lapidus A."/>
            <person name="Barry K."/>
            <person name="Detter J.C."/>
            <person name="Glavina del Rio T."/>
            <person name="Hammon N."/>
            <person name="Israni S."/>
            <person name="Dalin E."/>
            <person name="Tice H."/>
            <person name="Pitluck S."/>
            <person name="Di Bartolo G."/>
            <person name="Chain P."/>
            <person name="Malfatti S."/>
            <person name="Shin M."/>
            <person name="Vergez L."/>
            <person name="Schmutz J."/>
            <person name="Larimer F."/>
            <person name="Land M."/>
            <person name="Hauser L."/>
            <person name="Worsham P."/>
            <person name="Chu M."/>
            <person name="Bearden S."/>
            <person name="Garcia E."/>
            <person name="Richardson P."/>
        </authorList>
    </citation>
    <scope>NUCLEOTIDE SEQUENCE [LARGE SCALE GENOMIC DNA]</scope>
    <source>
        <strain>Pestoides F</strain>
    </source>
</reference>
<evidence type="ECO:0000255" key="1">
    <source>
        <dbReference type="HAMAP-Rule" id="MF_01363"/>
    </source>
</evidence>
<evidence type="ECO:0000305" key="2"/>
<sequence>MYAVFQSGGKQHRVSEGQTIRLEKLDIATGETIEFDQVLMIANGEEINIGAPLVDGGKIKAEIIAHGRGEKIKIVKFRRRKHYRKQQGHRQWFTDVKITGISA</sequence>
<feature type="chain" id="PRO_1000067918" description="Large ribosomal subunit protein bL21">
    <location>
        <begin position="1"/>
        <end position="103"/>
    </location>
</feature>
<proteinExistence type="inferred from homology"/>